<gene>
    <name evidence="2" type="primary">SLC2A4</name>
    <name evidence="2" type="synonym">GLUT4</name>
</gene>
<keyword id="KW-1003">Cell membrane</keyword>
<keyword id="KW-0963">Cytoplasm</keyword>
<keyword id="KW-0325">Glycoprotein</keyword>
<keyword id="KW-0449">Lipoprotein</keyword>
<keyword id="KW-0472">Membrane</keyword>
<keyword id="KW-0564">Palmitate</keyword>
<keyword id="KW-0597">Phosphoprotein</keyword>
<keyword id="KW-1185">Reference proteome</keyword>
<keyword id="KW-0762">Sugar transport</keyword>
<keyword id="KW-0812">Transmembrane</keyword>
<keyword id="KW-1133">Transmembrane helix</keyword>
<keyword id="KW-0813">Transport</keyword>
<keyword id="KW-0832">Ubl conjugation</keyword>
<feature type="chain" id="PRO_0000050365" description="Solute carrier family 2, facilitated glucose transporter member 4">
    <location>
        <begin position="1" status="less than"/>
        <end position="174" status="greater than"/>
    </location>
</feature>
<feature type="topological domain" description="Cytoplasmic" evidence="4">
    <location>
        <begin position="1" status="less than"/>
        <end position="19"/>
    </location>
</feature>
<feature type="transmembrane region" description="Helical; Name=1" evidence="4">
    <location>
        <begin position="20"/>
        <end position="40"/>
    </location>
</feature>
<feature type="topological domain" description="Extracellular" evidence="4">
    <location>
        <begin position="41"/>
        <end position="76"/>
    </location>
</feature>
<feature type="transmembrane region" description="Helical; Name=2" evidence="4">
    <location>
        <begin position="77"/>
        <end position="97"/>
    </location>
</feature>
<feature type="topological domain" description="Cytoplasmic" evidence="4">
    <location>
        <begin position="98"/>
        <end position="114"/>
    </location>
</feature>
<feature type="transmembrane region" description="Helical; Name=3" evidence="4">
    <location>
        <begin position="115"/>
        <end position="135"/>
    </location>
</feature>
<feature type="topological domain" description="Extracellular" evidence="4">
    <location>
        <begin position="136"/>
        <end position="137"/>
    </location>
</feature>
<feature type="transmembrane region" description="Helical; Name=4" evidence="4">
    <location>
        <begin position="138"/>
        <end position="158"/>
    </location>
</feature>
<feature type="topological domain" description="Cytoplasmic" evidence="4">
    <location>
        <begin position="159"/>
        <end position="166"/>
    </location>
</feature>
<feature type="transmembrane region" description="Helical; Name=5" evidence="4">
    <location>
        <begin position="167"/>
        <end position="174" status="greater than"/>
    </location>
</feature>
<feature type="region of interest" description="Interaction with SRFBP1" evidence="2">
    <location>
        <begin position="2"/>
        <end position="8"/>
    </location>
</feature>
<feature type="modified residue" description="Phosphoserine" evidence="3">
    <location>
        <position position="5"/>
    </location>
</feature>
<feature type="glycosylation site" description="N-linked (GlcNAc...) asparagine" evidence="4">
    <location>
        <position position="52"/>
    </location>
</feature>
<feature type="non-terminal residue">
    <location>
        <position position="1"/>
    </location>
</feature>
<feature type="non-terminal residue">
    <location>
        <position position="174"/>
    </location>
</feature>
<organism>
    <name type="scientific">Sus scrofa</name>
    <name type="common">Pig</name>
    <dbReference type="NCBI Taxonomy" id="9823"/>
    <lineage>
        <taxon>Eukaryota</taxon>
        <taxon>Metazoa</taxon>
        <taxon>Chordata</taxon>
        <taxon>Craniata</taxon>
        <taxon>Vertebrata</taxon>
        <taxon>Euteleostomi</taxon>
        <taxon>Mammalia</taxon>
        <taxon>Eutheria</taxon>
        <taxon>Laurasiatheria</taxon>
        <taxon>Artiodactyla</taxon>
        <taxon>Suina</taxon>
        <taxon>Suidae</taxon>
        <taxon>Sus</taxon>
    </lineage>
</organism>
<comment type="function">
    <text evidence="3">Insulin-regulated facilitative glucose transporter, which plays a key role in removal of glucose from circulation. Response to insulin is regulated by its intracellular localization: in the absence of insulin, it is efficiently retained intracellularly within storage compartments in muscle and fat cells. Upon insulin stimulation, translocates from these compartments to the cell surface where it transports glucose from the extracellular milieu into the cell.</text>
</comment>
<comment type="catalytic activity">
    <reaction evidence="3">
        <text>D-glucose(out) = D-glucose(in)</text>
        <dbReference type="Rhea" id="RHEA:60376"/>
        <dbReference type="ChEBI" id="CHEBI:4167"/>
    </reaction>
</comment>
<comment type="subunit">
    <text evidence="1 2 3">Binds to DAXX. Interacts via its N-terminus with SRFBP1 (By similarity). Interacts with NDUFA9 (By similarity). Interacts with TRARG1; the interaction is required for proper SLC2A4 recycling after insulin stimulation (By similarity).</text>
</comment>
<comment type="subcellular location">
    <subcellularLocation>
        <location evidence="1">Cell membrane</location>
        <topology evidence="1">Multi-pass membrane protein</topology>
    </subcellularLocation>
    <subcellularLocation>
        <location evidence="1">Endomembrane system</location>
        <topology evidence="1">Multi-pass membrane protein</topology>
    </subcellularLocation>
    <subcellularLocation>
        <location evidence="1">Cytoplasm</location>
        <location evidence="1">Perinuclear region</location>
    </subcellularLocation>
    <text evidence="1 2">Localizes primarily to the perinuclear region, undergoing continued recycling to the plasma membrane where it is rapidly reinternalized (By similarity). The dileucine internalization motif is critical for intracellular sequestration (By similarity). Insulin stimulation induces translocation to the cell membrane (By similarity).</text>
</comment>
<comment type="domain">
    <text evidence="2">The dileucine internalization motif is critical for intracellular sequestration.</text>
</comment>
<comment type="PTM">
    <text evidence="2">Sumoylated.</text>
</comment>
<comment type="PTM">
    <text evidence="2">Palmitoylated. Palmitoylation by ZDHHC7 controls the insulin-dependent translocation of GLUT4 to the plasma membrane.</text>
</comment>
<comment type="miscellaneous">
    <text evidence="1">Insulin-stimulated phosphorylation of TBC1D4 is required for GLUT4 translocation.</text>
</comment>
<comment type="similarity">
    <text evidence="5">Belongs to the major facilitator superfamily. Sugar transporter (TC 2.A.1.1) family. Glucose transporter subfamily.</text>
</comment>
<evidence type="ECO:0000250" key="1">
    <source>
        <dbReference type="UniProtKB" id="P14142"/>
    </source>
</evidence>
<evidence type="ECO:0000250" key="2">
    <source>
        <dbReference type="UniProtKB" id="P14672"/>
    </source>
</evidence>
<evidence type="ECO:0000250" key="3">
    <source>
        <dbReference type="UniProtKB" id="P19357"/>
    </source>
</evidence>
<evidence type="ECO:0000255" key="4"/>
<evidence type="ECO:0000305" key="5"/>
<accession>Q9XT10</accession>
<reference key="1">
    <citation type="journal article" date="2000" name="J. Anim. Sci.">
        <title>Effect of feed restriction on adipose tissue transcript concentrations in genetically lean and obese pigs.</title>
        <authorList>
            <person name="McNeel R.L."/>
            <person name="Ding S.T."/>
            <person name="Smith E.O."/>
            <person name="Mersmann H.J."/>
        </authorList>
    </citation>
    <scope>NUCLEOTIDE SEQUENCE [MRNA]</scope>
</reference>
<proteinExistence type="evidence at transcript level"/>
<name>GLUT4_PIG</name>
<dbReference type="EMBL" id="AF141956">
    <property type="protein sequence ID" value="AAD38524.1"/>
    <property type="molecule type" value="mRNA"/>
</dbReference>
<dbReference type="SMR" id="Q9XT10"/>
<dbReference type="STRING" id="9823.ENSSSCP00000018998"/>
<dbReference type="GlyCosmos" id="Q9XT10">
    <property type="glycosylation" value="1 site, No reported glycans"/>
</dbReference>
<dbReference type="GlyGen" id="Q9XT10">
    <property type="glycosylation" value="1 site"/>
</dbReference>
<dbReference type="PaxDb" id="9823-ENSSSCP00000018998"/>
<dbReference type="eggNOG" id="KOG0569">
    <property type="taxonomic scope" value="Eukaryota"/>
</dbReference>
<dbReference type="HOGENOM" id="CLU_001265_30_5_1"/>
<dbReference type="InParanoid" id="Q9XT10"/>
<dbReference type="Proteomes" id="UP000008227">
    <property type="component" value="Unplaced"/>
</dbReference>
<dbReference type="Proteomes" id="UP000314985">
    <property type="component" value="Unplaced"/>
</dbReference>
<dbReference type="Proteomes" id="UP000694570">
    <property type="component" value="Unplaced"/>
</dbReference>
<dbReference type="Proteomes" id="UP000694571">
    <property type="component" value="Unplaced"/>
</dbReference>
<dbReference type="Proteomes" id="UP000694720">
    <property type="component" value="Unplaced"/>
</dbReference>
<dbReference type="Proteomes" id="UP000694722">
    <property type="component" value="Unplaced"/>
</dbReference>
<dbReference type="Proteomes" id="UP000694723">
    <property type="component" value="Unplaced"/>
</dbReference>
<dbReference type="Proteomes" id="UP000694724">
    <property type="component" value="Unplaced"/>
</dbReference>
<dbReference type="Proteomes" id="UP000694725">
    <property type="component" value="Unplaced"/>
</dbReference>
<dbReference type="Proteomes" id="UP000694726">
    <property type="component" value="Unplaced"/>
</dbReference>
<dbReference type="Proteomes" id="UP000694727">
    <property type="component" value="Unplaced"/>
</dbReference>
<dbReference type="Proteomes" id="UP000694728">
    <property type="component" value="Unplaced"/>
</dbReference>
<dbReference type="GO" id="GO:0030659">
    <property type="term" value="C:cytoplasmic vesicle membrane"/>
    <property type="evidence" value="ECO:0000250"/>
    <property type="project" value="UniProtKB"/>
</dbReference>
<dbReference type="GO" id="GO:0012505">
    <property type="term" value="C:endomembrane system"/>
    <property type="evidence" value="ECO:0000250"/>
    <property type="project" value="UniProtKB"/>
</dbReference>
<dbReference type="GO" id="GO:0032593">
    <property type="term" value="C:insulin-responsive compartment"/>
    <property type="evidence" value="ECO:0000250"/>
    <property type="project" value="UniProtKB"/>
</dbReference>
<dbReference type="GO" id="GO:0048471">
    <property type="term" value="C:perinuclear region of cytoplasm"/>
    <property type="evidence" value="ECO:0000250"/>
    <property type="project" value="UniProtKB"/>
</dbReference>
<dbReference type="GO" id="GO:0005886">
    <property type="term" value="C:plasma membrane"/>
    <property type="evidence" value="ECO:0000250"/>
    <property type="project" value="UniProtKB"/>
</dbReference>
<dbReference type="GO" id="GO:0055056">
    <property type="term" value="F:D-glucose transmembrane transporter activity"/>
    <property type="evidence" value="ECO:0000250"/>
    <property type="project" value="UniProtKB"/>
</dbReference>
<dbReference type="GO" id="GO:0015304">
    <property type="term" value="F:D-glucose uniporter activity"/>
    <property type="evidence" value="ECO:0000250"/>
    <property type="project" value="UniProtKB"/>
</dbReference>
<dbReference type="GO" id="GO:1904659">
    <property type="term" value="P:D-glucose transmembrane transport"/>
    <property type="evidence" value="ECO:0000250"/>
    <property type="project" value="UniProtKB"/>
</dbReference>
<dbReference type="GO" id="GO:0044381">
    <property type="term" value="P:glucose import in response to insulin stimulus"/>
    <property type="evidence" value="ECO:0000250"/>
    <property type="project" value="UniProtKB"/>
</dbReference>
<dbReference type="Gene3D" id="1.20.1250.20">
    <property type="entry name" value="MFS general substrate transporter like domains"/>
    <property type="match status" value="1"/>
</dbReference>
<dbReference type="InterPro" id="IPR002441">
    <property type="entry name" value="Glc_transpt_4"/>
</dbReference>
<dbReference type="InterPro" id="IPR045263">
    <property type="entry name" value="GLUT"/>
</dbReference>
<dbReference type="InterPro" id="IPR020846">
    <property type="entry name" value="MFS_dom"/>
</dbReference>
<dbReference type="InterPro" id="IPR005828">
    <property type="entry name" value="MFS_sugar_transport-like"/>
</dbReference>
<dbReference type="InterPro" id="IPR036259">
    <property type="entry name" value="MFS_trans_sf"/>
</dbReference>
<dbReference type="InterPro" id="IPR003663">
    <property type="entry name" value="Sugar/inositol_transpt"/>
</dbReference>
<dbReference type="InterPro" id="IPR005829">
    <property type="entry name" value="Sugar_transporter_CS"/>
</dbReference>
<dbReference type="PANTHER" id="PTHR23503">
    <property type="entry name" value="SOLUTE CARRIER FAMILY 2"/>
    <property type="match status" value="1"/>
</dbReference>
<dbReference type="PANTHER" id="PTHR23503:SF120">
    <property type="entry name" value="SOLUTE CARRIER FAMILY 2, FACILITATED GLUCOSE TRANSPORTER MEMBER 4"/>
    <property type="match status" value="1"/>
</dbReference>
<dbReference type="Pfam" id="PF00083">
    <property type="entry name" value="Sugar_tr"/>
    <property type="match status" value="1"/>
</dbReference>
<dbReference type="PRINTS" id="PR01193">
    <property type="entry name" value="GLUCTRSPORT4"/>
</dbReference>
<dbReference type="PRINTS" id="PR00171">
    <property type="entry name" value="SUGRTRNSPORT"/>
</dbReference>
<dbReference type="SUPFAM" id="SSF103473">
    <property type="entry name" value="MFS general substrate transporter"/>
    <property type="match status" value="1"/>
</dbReference>
<dbReference type="PROSITE" id="PS50850">
    <property type="entry name" value="MFS"/>
    <property type="match status" value="1"/>
</dbReference>
<dbReference type="PROSITE" id="PS00217">
    <property type="entry name" value="SUGAR_TRANSPORT_2"/>
    <property type="match status" value="1"/>
</dbReference>
<protein>
    <recommendedName>
        <fullName evidence="5">Solute carrier family 2, facilitated glucose transporter member 4</fullName>
    </recommendedName>
    <alternativeName>
        <fullName evidence="2">Glucose transporter type 4, insulin-responsive</fullName>
        <shortName evidence="2">GLUT-4</shortName>
    </alternativeName>
</protein>
<sequence length="174" mass="18208">QQIGSEDGEPPQQRVTGTLVLAVFSAVLGSLQFGYNIGVINAPQKVIEQSYNETWLGRQGPNGPGSIPPGTLTTLWALSVAIFSVGGMFSSFLLGIISQWLGRKKAMLFNNTLAVLAGALMGLAKAAASYEMLILGRFLIGAYSGLASGLVPMYVGEIAPTHLRGALGTLNQLA</sequence>